<accession>Q9CB92</accession>
<protein>
    <recommendedName>
        <fullName evidence="1">Endonuclease III</fullName>
        <ecNumber evidence="1">4.2.99.18</ecNumber>
    </recommendedName>
    <alternativeName>
        <fullName evidence="1">DNA-(apurinic or apyrimidinic site) lyase</fullName>
    </alternativeName>
</protein>
<name>END3_MYCLE</name>
<gene>
    <name evidence="1" type="primary">nth</name>
    <name type="ordered locus">ML2301</name>
</gene>
<feature type="chain" id="PRO_0000102218" description="Endonuclease III">
    <location>
        <begin position="1"/>
        <end position="245"/>
    </location>
</feature>
<feature type="domain" description="HhH" evidence="1">
    <location>
        <begin position="119"/>
        <end position="138"/>
    </location>
</feature>
<feature type="binding site" evidence="1">
    <location>
        <position position="198"/>
    </location>
    <ligand>
        <name>[4Fe-4S] cluster</name>
        <dbReference type="ChEBI" id="CHEBI:49883"/>
    </ligand>
</feature>
<feature type="binding site" evidence="1">
    <location>
        <position position="205"/>
    </location>
    <ligand>
        <name>[4Fe-4S] cluster</name>
        <dbReference type="ChEBI" id="CHEBI:49883"/>
    </ligand>
</feature>
<feature type="binding site" evidence="1">
    <location>
        <position position="208"/>
    </location>
    <ligand>
        <name>[4Fe-4S] cluster</name>
        <dbReference type="ChEBI" id="CHEBI:49883"/>
    </ligand>
</feature>
<feature type="binding site" evidence="1">
    <location>
        <position position="214"/>
    </location>
    <ligand>
        <name>[4Fe-4S] cluster</name>
        <dbReference type="ChEBI" id="CHEBI:49883"/>
    </ligand>
</feature>
<proteinExistence type="inferred from homology"/>
<reference key="1">
    <citation type="journal article" date="2001" name="Nature">
        <title>Massive gene decay in the leprosy bacillus.</title>
        <authorList>
            <person name="Cole S.T."/>
            <person name="Eiglmeier K."/>
            <person name="Parkhill J."/>
            <person name="James K.D."/>
            <person name="Thomson N.R."/>
            <person name="Wheeler P.R."/>
            <person name="Honore N."/>
            <person name="Garnier T."/>
            <person name="Churcher C.M."/>
            <person name="Harris D.E."/>
            <person name="Mungall K.L."/>
            <person name="Basham D."/>
            <person name="Brown D."/>
            <person name="Chillingworth T."/>
            <person name="Connor R."/>
            <person name="Davies R.M."/>
            <person name="Devlin K."/>
            <person name="Duthoy S."/>
            <person name="Feltwell T."/>
            <person name="Fraser A."/>
            <person name="Hamlin N."/>
            <person name="Holroyd S."/>
            <person name="Hornsby T."/>
            <person name="Jagels K."/>
            <person name="Lacroix C."/>
            <person name="Maclean J."/>
            <person name="Moule S."/>
            <person name="Murphy L.D."/>
            <person name="Oliver K."/>
            <person name="Quail M.A."/>
            <person name="Rajandream M.A."/>
            <person name="Rutherford K.M."/>
            <person name="Rutter S."/>
            <person name="Seeger K."/>
            <person name="Simon S."/>
            <person name="Simmonds M."/>
            <person name="Skelton J."/>
            <person name="Squares R."/>
            <person name="Squares S."/>
            <person name="Stevens K."/>
            <person name="Taylor K."/>
            <person name="Whitehead S."/>
            <person name="Woodward J.R."/>
            <person name="Barrell B.G."/>
        </authorList>
    </citation>
    <scope>NUCLEOTIDE SEQUENCE [LARGE SCALE GENOMIC DNA]</scope>
    <source>
        <strain>TN</strain>
    </source>
</reference>
<dbReference type="EC" id="4.2.99.18" evidence="1"/>
<dbReference type="EMBL" id="AL583925">
    <property type="protein sequence ID" value="CAC31817.1"/>
    <property type="status" value="ALT_INIT"/>
    <property type="molecule type" value="Genomic_DNA"/>
</dbReference>
<dbReference type="PIR" id="A87197">
    <property type="entry name" value="A87197"/>
</dbReference>
<dbReference type="SMR" id="Q9CB92"/>
<dbReference type="STRING" id="272631.gene:17576161"/>
<dbReference type="KEGG" id="mle:ML2301"/>
<dbReference type="Leproma" id="ML2301"/>
<dbReference type="eggNOG" id="COG0177">
    <property type="taxonomic scope" value="Bacteria"/>
</dbReference>
<dbReference type="HOGENOM" id="CLU_012862_3_3_11"/>
<dbReference type="Proteomes" id="UP000000806">
    <property type="component" value="Chromosome"/>
</dbReference>
<dbReference type="GO" id="GO:0051539">
    <property type="term" value="F:4 iron, 4 sulfur cluster binding"/>
    <property type="evidence" value="ECO:0007669"/>
    <property type="project" value="UniProtKB-UniRule"/>
</dbReference>
<dbReference type="GO" id="GO:0140078">
    <property type="term" value="F:class I DNA-(apurinic or apyrimidinic site) endonuclease activity"/>
    <property type="evidence" value="ECO:0007669"/>
    <property type="project" value="UniProtKB-EC"/>
</dbReference>
<dbReference type="GO" id="GO:0003677">
    <property type="term" value="F:DNA binding"/>
    <property type="evidence" value="ECO:0007669"/>
    <property type="project" value="UniProtKB-UniRule"/>
</dbReference>
<dbReference type="GO" id="GO:0019104">
    <property type="term" value="F:DNA N-glycosylase activity"/>
    <property type="evidence" value="ECO:0007669"/>
    <property type="project" value="UniProtKB-UniRule"/>
</dbReference>
<dbReference type="GO" id="GO:0046872">
    <property type="term" value="F:metal ion binding"/>
    <property type="evidence" value="ECO:0007669"/>
    <property type="project" value="UniProtKB-KW"/>
</dbReference>
<dbReference type="GO" id="GO:0006285">
    <property type="term" value="P:base-excision repair, AP site formation"/>
    <property type="evidence" value="ECO:0007669"/>
    <property type="project" value="TreeGrafter"/>
</dbReference>
<dbReference type="CDD" id="cd00056">
    <property type="entry name" value="ENDO3c"/>
    <property type="match status" value="1"/>
</dbReference>
<dbReference type="FunFam" id="1.10.1670.10:FF:000001">
    <property type="entry name" value="Endonuclease III"/>
    <property type="match status" value="1"/>
</dbReference>
<dbReference type="FunFam" id="1.10.340.30:FF:000001">
    <property type="entry name" value="Endonuclease III"/>
    <property type="match status" value="1"/>
</dbReference>
<dbReference type="Gene3D" id="1.10.1670.10">
    <property type="entry name" value="Helix-hairpin-Helix base-excision DNA repair enzymes (C-terminal)"/>
    <property type="match status" value="1"/>
</dbReference>
<dbReference type="Gene3D" id="1.10.340.30">
    <property type="entry name" value="Hypothetical protein, domain 2"/>
    <property type="match status" value="1"/>
</dbReference>
<dbReference type="HAMAP" id="MF_00942">
    <property type="entry name" value="Nth"/>
    <property type="match status" value="1"/>
</dbReference>
<dbReference type="InterPro" id="IPR011257">
    <property type="entry name" value="DNA_glycosylase"/>
</dbReference>
<dbReference type="InterPro" id="IPR004036">
    <property type="entry name" value="Endonuclease-III-like_CS2"/>
</dbReference>
<dbReference type="InterPro" id="IPR003651">
    <property type="entry name" value="Endonuclease3_FeS-loop_motif"/>
</dbReference>
<dbReference type="InterPro" id="IPR004035">
    <property type="entry name" value="Endouclease-III_FeS-bd_BS"/>
</dbReference>
<dbReference type="InterPro" id="IPR003265">
    <property type="entry name" value="HhH-GPD_domain"/>
</dbReference>
<dbReference type="InterPro" id="IPR023170">
    <property type="entry name" value="HhH_base_excis_C"/>
</dbReference>
<dbReference type="InterPro" id="IPR005759">
    <property type="entry name" value="Nth"/>
</dbReference>
<dbReference type="NCBIfam" id="TIGR01083">
    <property type="entry name" value="nth"/>
    <property type="match status" value="1"/>
</dbReference>
<dbReference type="PANTHER" id="PTHR10359">
    <property type="entry name" value="A/G-SPECIFIC ADENINE GLYCOSYLASE/ENDONUCLEASE III"/>
    <property type="match status" value="1"/>
</dbReference>
<dbReference type="PANTHER" id="PTHR10359:SF18">
    <property type="entry name" value="ENDONUCLEASE III"/>
    <property type="match status" value="1"/>
</dbReference>
<dbReference type="Pfam" id="PF10576">
    <property type="entry name" value="EndIII_4Fe-2S"/>
    <property type="match status" value="1"/>
</dbReference>
<dbReference type="Pfam" id="PF00730">
    <property type="entry name" value="HhH-GPD"/>
    <property type="match status" value="1"/>
</dbReference>
<dbReference type="SMART" id="SM00478">
    <property type="entry name" value="ENDO3c"/>
    <property type="match status" value="1"/>
</dbReference>
<dbReference type="SMART" id="SM00525">
    <property type="entry name" value="FES"/>
    <property type="match status" value="1"/>
</dbReference>
<dbReference type="SUPFAM" id="SSF48150">
    <property type="entry name" value="DNA-glycosylase"/>
    <property type="match status" value="1"/>
</dbReference>
<dbReference type="PROSITE" id="PS00764">
    <property type="entry name" value="ENDONUCLEASE_III_1"/>
    <property type="match status" value="1"/>
</dbReference>
<dbReference type="PROSITE" id="PS01155">
    <property type="entry name" value="ENDONUCLEASE_III_2"/>
    <property type="match status" value="1"/>
</dbReference>
<evidence type="ECO:0000255" key="1">
    <source>
        <dbReference type="HAMAP-Rule" id="MF_00942"/>
    </source>
</evidence>
<evidence type="ECO:0000305" key="2"/>
<sequence length="245" mass="27194">MARRWSGETRLGLVRRARRMNRALAQAFPHVYCELDFTSPLELTVATILSAQSTDKRVNLTTPAVFARYRSALDYMQADRAELENFIRPTGFFRNKAASLIRLGQALVERFDGEVPSTMVDLFTLPGVGRKTANVILGNAFGIPGITVDTHFGRLVRRWRWTAEEDPVKVEHAVGELIERDQWTLLSHRVIFHGRRVCHARKPACGVCVLAKDCPSFGLGPTEPLLAAPLVQGPEAGHLLALAGL</sequence>
<organism>
    <name type="scientific">Mycobacterium leprae (strain TN)</name>
    <dbReference type="NCBI Taxonomy" id="272631"/>
    <lineage>
        <taxon>Bacteria</taxon>
        <taxon>Bacillati</taxon>
        <taxon>Actinomycetota</taxon>
        <taxon>Actinomycetes</taxon>
        <taxon>Mycobacteriales</taxon>
        <taxon>Mycobacteriaceae</taxon>
        <taxon>Mycobacterium</taxon>
    </lineage>
</organism>
<comment type="function">
    <text evidence="1">DNA repair enzyme that has both DNA N-glycosylase activity and AP-lyase activity. The DNA N-glycosylase activity releases various damaged pyrimidines from DNA by cleaving the N-glycosidic bond, leaving an AP (apurinic/apyrimidinic) site. The AP-lyase activity cleaves the phosphodiester bond 3' to the AP site by a beta-elimination, leaving a 3'-terminal unsaturated sugar and a product with a terminal 5'-phosphate.</text>
</comment>
<comment type="catalytic activity">
    <reaction evidence="1">
        <text>2'-deoxyribonucleotide-(2'-deoxyribose 5'-phosphate)-2'-deoxyribonucleotide-DNA = a 3'-end 2'-deoxyribonucleotide-(2,3-dehydro-2,3-deoxyribose 5'-phosphate)-DNA + a 5'-end 5'-phospho-2'-deoxyribonucleoside-DNA + H(+)</text>
        <dbReference type="Rhea" id="RHEA:66592"/>
        <dbReference type="Rhea" id="RHEA-COMP:13180"/>
        <dbReference type="Rhea" id="RHEA-COMP:16897"/>
        <dbReference type="Rhea" id="RHEA-COMP:17067"/>
        <dbReference type="ChEBI" id="CHEBI:15378"/>
        <dbReference type="ChEBI" id="CHEBI:136412"/>
        <dbReference type="ChEBI" id="CHEBI:157695"/>
        <dbReference type="ChEBI" id="CHEBI:167181"/>
        <dbReference type="EC" id="4.2.99.18"/>
    </reaction>
</comment>
<comment type="cofactor">
    <cofactor evidence="1">
        <name>[4Fe-4S] cluster</name>
        <dbReference type="ChEBI" id="CHEBI:49883"/>
    </cofactor>
    <text evidence="1">Binds 1 [4Fe-4S] cluster.</text>
</comment>
<comment type="similarity">
    <text evidence="1">Belongs to the Nth/MutY family.</text>
</comment>
<comment type="sequence caution" evidence="2">
    <conflict type="erroneous initiation">
        <sequence resource="EMBL-CDS" id="CAC31817"/>
    </conflict>
</comment>
<keyword id="KW-0004">4Fe-4S</keyword>
<keyword id="KW-0227">DNA damage</keyword>
<keyword id="KW-0234">DNA repair</keyword>
<keyword id="KW-0238">DNA-binding</keyword>
<keyword id="KW-0326">Glycosidase</keyword>
<keyword id="KW-0378">Hydrolase</keyword>
<keyword id="KW-0408">Iron</keyword>
<keyword id="KW-0411">Iron-sulfur</keyword>
<keyword id="KW-0456">Lyase</keyword>
<keyword id="KW-0479">Metal-binding</keyword>
<keyword id="KW-1185">Reference proteome</keyword>